<organism>
    <name type="scientific">Hathewaya limosa</name>
    <name type="common">Clostridium limosum</name>
    <dbReference type="NCBI Taxonomy" id="1536"/>
    <lineage>
        <taxon>Bacteria</taxon>
        <taxon>Bacillati</taxon>
        <taxon>Bacillota</taxon>
        <taxon>Clostridia</taxon>
        <taxon>Eubacteriales</taxon>
        <taxon>Clostridiaceae</taxon>
        <taxon>Hathewaya</taxon>
    </lineage>
</organism>
<name>ARC3_HATLI</name>
<gene>
    <name type="primary">c3</name>
</gene>
<accession>Q46134</accession>
<comment type="function">
    <text evidence="1">ADP-ribosylates eukaryotic Rho and Rac proteins on an asparagine residue.</text>
</comment>
<comment type="catalytic activity">
    <reaction evidence="1">
        <text>L-asparaginyl-[protein] + NAD(+) = N(4)-(ADP-D-ribosyl)-L-asparaginyl-[protein] + nicotinamide + H(+)</text>
        <dbReference type="Rhea" id="RHEA:58228"/>
        <dbReference type="Rhea" id="RHEA-COMP:12804"/>
        <dbReference type="Rhea" id="RHEA-COMP:15090"/>
        <dbReference type="ChEBI" id="CHEBI:15378"/>
        <dbReference type="ChEBI" id="CHEBI:17154"/>
        <dbReference type="ChEBI" id="CHEBI:50347"/>
        <dbReference type="ChEBI" id="CHEBI:57540"/>
        <dbReference type="ChEBI" id="CHEBI:142555"/>
    </reaction>
</comment>
<comment type="subunit">
    <text evidence="1">Monomer.</text>
</comment>
<comment type="subcellular location">
    <subcellularLocation>
        <location evidence="1">Secreted</location>
    </subcellularLocation>
</comment>
<comment type="similarity">
    <text evidence="5">To C.botulinum D and C phages exoenzyme C3, and to S.aureus EdiN.</text>
</comment>
<proteinExistence type="evidence at protein level"/>
<sequence length="250" mass="27852">MNKLTERVLCVGVSGLILFSVAALVQGTKKCYANPVRNRAASRVKPYADSFKEFTNIDEARAWGDKQFAKYKLSSSEKNALTIYTRNAARINGPLRANQGNTNGLPADIRKEVEQIDKSFTKMQTPENIILFRGDDPGYLGPDFENTILNRDGTINKAVFEQVKLRFKGKDRKEYGYISTSLVNGSAFAGRPIITKFKVLDGSKAGYIEPISTFKGQLEVLLPRSSTYTISDMQIAPNNKQIIITALLKR</sequence>
<protein>
    <recommendedName>
        <fullName>Mono-ADP-ribosyltransferase C3</fullName>
        <ecNumber>2.4.2.-</ecNumber>
    </recommendedName>
    <alternativeName>
        <fullName>Exoenzyme C3</fullName>
    </alternativeName>
</protein>
<dbReference type="EC" id="2.4.2.-"/>
<dbReference type="EMBL" id="X87215">
    <property type="protein sequence ID" value="CAA60674.1"/>
    <property type="molecule type" value="Genomic_DNA"/>
</dbReference>
<dbReference type="PDB" id="3BW8">
    <property type="method" value="X-ray"/>
    <property type="resolution" value="1.80 A"/>
    <property type="chains" value="A/B=46-250"/>
</dbReference>
<dbReference type="PDBsum" id="3BW8"/>
<dbReference type="SMR" id="Q46134"/>
<dbReference type="EvolutionaryTrace" id="Q46134"/>
<dbReference type="GO" id="GO:0005576">
    <property type="term" value="C:extracellular region"/>
    <property type="evidence" value="ECO:0007669"/>
    <property type="project" value="UniProtKB-SubCell"/>
</dbReference>
<dbReference type="GO" id="GO:1990404">
    <property type="term" value="F:NAD+-protein mono-ADP-ribosyltransferase activity"/>
    <property type="evidence" value="ECO:0007669"/>
    <property type="project" value="InterPro"/>
</dbReference>
<dbReference type="GO" id="GO:0016779">
    <property type="term" value="F:nucleotidyltransferase activity"/>
    <property type="evidence" value="ECO:0007669"/>
    <property type="project" value="UniProtKB-KW"/>
</dbReference>
<dbReference type="CDD" id="cd00233">
    <property type="entry name" value="VIP2"/>
    <property type="match status" value="1"/>
</dbReference>
<dbReference type="Gene3D" id="3.90.176.10">
    <property type="entry name" value="Toxin ADP-ribosyltransferase, Chain A, domain 1"/>
    <property type="match status" value="1"/>
</dbReference>
<dbReference type="InterPro" id="IPR003540">
    <property type="entry name" value="ADP-ribosyltransferase"/>
</dbReference>
<dbReference type="InterPro" id="IPR016678">
    <property type="entry name" value="Mono-ADP_RibTrfase_C3/Edin"/>
</dbReference>
<dbReference type="Pfam" id="PF03496">
    <property type="entry name" value="ADPrib_exo_Tox"/>
    <property type="match status" value="1"/>
</dbReference>
<dbReference type="PIRSF" id="PIRSF016951">
    <property type="entry name" value="MADP_ribosyltransf_Edin"/>
    <property type="match status" value="1"/>
</dbReference>
<dbReference type="SUPFAM" id="SSF56399">
    <property type="entry name" value="ADP-ribosylation"/>
    <property type="match status" value="1"/>
</dbReference>
<dbReference type="PROSITE" id="PS51996">
    <property type="entry name" value="TR_MART"/>
    <property type="match status" value="1"/>
</dbReference>
<keyword id="KW-0002">3D-structure</keyword>
<keyword id="KW-0903">Direct protein sequencing</keyword>
<keyword id="KW-0328">Glycosyltransferase</keyword>
<keyword id="KW-0520">NAD</keyword>
<keyword id="KW-0548">Nucleotidyltransferase</keyword>
<keyword id="KW-0964">Secreted</keyword>
<keyword id="KW-0732">Signal</keyword>
<keyword id="KW-0808">Transferase</keyword>
<evidence type="ECO:0000250" key="1">
    <source>
        <dbReference type="UniProtKB" id="P15879"/>
    </source>
</evidence>
<evidence type="ECO:0000255" key="2"/>
<evidence type="ECO:0000255" key="3">
    <source>
        <dbReference type="PROSITE-ProRule" id="PRU01340"/>
    </source>
</evidence>
<evidence type="ECO:0000269" key="4">
    <source>
    </source>
</evidence>
<evidence type="ECO:0000305" key="5"/>
<evidence type="ECO:0007829" key="6">
    <source>
        <dbReference type="PDB" id="3BW8"/>
    </source>
</evidence>
<reference key="1">
    <citation type="journal article" date="1996" name="Biochemistry">
        <title>Active site mutation of the C3-like ADP-ribosyltransferase from Clostridium limosum -- analysis of glutamic acid 174.</title>
        <authorList>
            <person name="Boehmer J."/>
            <person name="Jung M."/>
            <person name="Sehr P."/>
            <person name="Fritz G."/>
            <person name="Popoff M.R."/>
            <person name="Just I."/>
            <person name="Aktories K."/>
        </authorList>
    </citation>
    <scope>NUCLEOTIDE SEQUENCE [GENOMIC DNA]</scope>
    <scope>MUTAGENESIS OF GLU-219</scope>
    <source>
        <strain>2</strain>
    </source>
</reference>
<reference key="2">
    <citation type="journal article" date="1992" name="J. Biol. Chem.">
        <title>Purification and characterization of an ADP-ribosyltransferase produced by Clostridium limosum.</title>
        <authorList>
            <person name="Just I."/>
            <person name="Mohr C."/>
            <person name="Schallehn G."/>
            <person name="Menard L."/>
            <person name="Didsbury J.R."/>
            <person name="Vandekerckhove J."/>
            <person name="van Damme J."/>
            <person name="Aktories K."/>
        </authorList>
    </citation>
    <scope>PARTIAL PROTEIN SEQUENCE</scope>
</reference>
<reference key="3">
    <citation type="journal article" date="1993" name="J. Biol. Chem.">
        <title>NAD-binding site of the C3-like ADP-ribosyltransferase from Clostridium limosum.</title>
        <authorList>
            <person name="Jung M."/>
            <person name="Just I."/>
            <person name="van Damme J."/>
            <person name="Vandekerckhove J."/>
            <person name="Aktories K."/>
        </authorList>
    </citation>
    <scope>PARTIAL PROTEIN SEQUENCE</scope>
</reference>
<feature type="signal peptide" evidence="2">
    <location>
        <begin position="1"/>
        <end position="45"/>
    </location>
</feature>
<feature type="chain" id="PRO_0000020756" description="Mono-ADP-ribosyltransferase C3">
    <location>
        <begin position="46"/>
        <end position="250"/>
    </location>
</feature>
<feature type="domain" description="TR mART core" evidence="3">
    <location>
        <begin position="49"/>
        <end position="250"/>
    </location>
</feature>
<feature type="active site" evidence="3">
    <location>
        <position position="133"/>
    </location>
</feature>
<feature type="active site" evidence="3">
    <location>
        <position position="179"/>
    </location>
</feature>
<feature type="active site" evidence="3">
    <location>
        <position position="219"/>
    </location>
</feature>
<feature type="binding site" evidence="1">
    <location>
        <position position="85"/>
    </location>
    <ligand>
        <name>NAD(+)</name>
        <dbReference type="ChEBI" id="CHEBI:57540"/>
    </ligand>
</feature>
<feature type="binding site" evidence="1">
    <location>
        <position position="92"/>
    </location>
    <ligand>
        <name>NAD(+)</name>
        <dbReference type="ChEBI" id="CHEBI:57540"/>
    </ligand>
</feature>
<feature type="binding site" evidence="1">
    <location>
        <position position="96"/>
    </location>
    <ligand>
        <name>NAD(+)</name>
        <dbReference type="ChEBI" id="CHEBI:57540"/>
    </ligand>
</feature>
<feature type="binding site" evidence="1">
    <location>
        <begin position="133"/>
        <end position="136"/>
    </location>
    <ligand>
        <name>NAD(+)</name>
        <dbReference type="ChEBI" id="CHEBI:57540"/>
    </ligand>
</feature>
<feature type="binding site" evidence="1">
    <location>
        <begin position="172"/>
        <end position="174"/>
    </location>
    <ligand>
        <name>NAD(+)</name>
        <dbReference type="ChEBI" id="CHEBI:57540"/>
    </ligand>
</feature>
<feature type="binding site" evidence="1">
    <location>
        <begin position="188"/>
        <end position="191"/>
    </location>
    <ligand>
        <name>NAD(+)</name>
        <dbReference type="ChEBI" id="CHEBI:57540"/>
    </ligand>
</feature>
<feature type="binding site" evidence="1">
    <location>
        <begin position="217"/>
        <end position="219"/>
    </location>
    <ligand>
        <name>NAD(+)</name>
        <dbReference type="ChEBI" id="CHEBI:57540"/>
    </ligand>
</feature>
<feature type="site" description="Transition state stabilizer" evidence="4">
    <location>
        <position position="219"/>
    </location>
</feature>
<feature type="mutagenesis site" description="Major decrease in kcat, but no major changes in Km." evidence="4">
    <original>E</original>
    <variation>D</variation>
    <variation>Q</variation>
    <location>
        <position position="219"/>
    </location>
</feature>
<feature type="helix" evidence="6">
    <location>
        <begin position="57"/>
        <end position="71"/>
    </location>
</feature>
<feature type="helix" evidence="6">
    <location>
        <begin position="75"/>
        <end position="86"/>
    </location>
</feature>
<feature type="helix" evidence="6">
    <location>
        <begin position="88"/>
        <end position="97"/>
    </location>
</feature>
<feature type="turn" evidence="6">
    <location>
        <begin position="98"/>
        <end position="100"/>
    </location>
</feature>
<feature type="helix" evidence="6">
    <location>
        <begin position="102"/>
        <end position="104"/>
    </location>
</feature>
<feature type="helix" evidence="6">
    <location>
        <begin position="107"/>
        <end position="120"/>
    </location>
</feature>
<feature type="strand" evidence="6">
    <location>
        <begin position="129"/>
        <end position="135"/>
    </location>
</feature>
<feature type="helix" evidence="6">
    <location>
        <begin position="137"/>
        <end position="140"/>
    </location>
</feature>
<feature type="helix" evidence="6">
    <location>
        <begin position="142"/>
        <end position="145"/>
    </location>
</feature>
<feature type="helix" evidence="6">
    <location>
        <begin position="157"/>
        <end position="167"/>
    </location>
</feature>
<feature type="strand" evidence="6">
    <location>
        <begin position="171"/>
        <end position="176"/>
    </location>
</feature>
<feature type="strand" evidence="6">
    <location>
        <begin position="178"/>
        <end position="183"/>
    </location>
</feature>
<feature type="helix" evidence="6">
    <location>
        <begin position="186"/>
        <end position="188"/>
    </location>
</feature>
<feature type="strand" evidence="6">
    <location>
        <begin position="192"/>
        <end position="199"/>
    </location>
</feature>
<feature type="helix" evidence="6">
    <location>
        <begin position="209"/>
        <end position="211"/>
    </location>
</feature>
<feature type="strand" evidence="6">
    <location>
        <begin position="219"/>
        <end position="222"/>
    </location>
</feature>
<feature type="strand" evidence="6">
    <location>
        <begin position="226"/>
        <end position="235"/>
    </location>
</feature>
<feature type="strand" evidence="6">
    <location>
        <begin position="242"/>
        <end position="248"/>
    </location>
</feature>